<dbReference type="EC" id="3.4.16.4" evidence="1"/>
<dbReference type="EMBL" id="CP001138">
    <property type="protein sequence ID" value="ACH50914.1"/>
    <property type="molecule type" value="Genomic_DNA"/>
</dbReference>
<dbReference type="SMR" id="B5F0K5"/>
<dbReference type="MEROPS" id="S12.A03"/>
<dbReference type="KEGG" id="sea:SeAg_B2622"/>
<dbReference type="HOGENOM" id="CLU_020027_1_2_6"/>
<dbReference type="Proteomes" id="UP000008819">
    <property type="component" value="Chromosome"/>
</dbReference>
<dbReference type="GO" id="GO:0005886">
    <property type="term" value="C:plasma membrane"/>
    <property type="evidence" value="ECO:0007669"/>
    <property type="project" value="UniProtKB-SubCell"/>
</dbReference>
<dbReference type="GO" id="GO:0009002">
    <property type="term" value="F:serine-type D-Ala-D-Ala carboxypeptidase activity"/>
    <property type="evidence" value="ECO:0007669"/>
    <property type="project" value="UniProtKB-UniRule"/>
</dbReference>
<dbReference type="GO" id="GO:0006508">
    <property type="term" value="P:proteolysis"/>
    <property type="evidence" value="ECO:0007669"/>
    <property type="project" value="UniProtKB-KW"/>
</dbReference>
<dbReference type="Gene3D" id="3.40.710.10">
    <property type="entry name" value="DD-peptidase/beta-lactamase superfamily"/>
    <property type="match status" value="1"/>
</dbReference>
<dbReference type="HAMAP" id="MF_01034">
    <property type="entry name" value="S12_YfeW"/>
    <property type="match status" value="1"/>
</dbReference>
<dbReference type="InterPro" id="IPR001466">
    <property type="entry name" value="Beta-lactam-related"/>
</dbReference>
<dbReference type="InterPro" id="IPR012338">
    <property type="entry name" value="Beta-lactam/transpept-like"/>
</dbReference>
<dbReference type="InterPro" id="IPR050789">
    <property type="entry name" value="Diverse_Enzym_Activities"/>
</dbReference>
<dbReference type="InterPro" id="IPR022849">
    <property type="entry name" value="Pept_S12_YfeW/YbbE-like"/>
</dbReference>
<dbReference type="NCBIfam" id="NF002968">
    <property type="entry name" value="PRK03642.1"/>
    <property type="match status" value="1"/>
</dbReference>
<dbReference type="PANTHER" id="PTHR43283">
    <property type="entry name" value="BETA-LACTAMASE-RELATED"/>
    <property type="match status" value="1"/>
</dbReference>
<dbReference type="PANTHER" id="PTHR43283:SF11">
    <property type="entry name" value="BETA-LACTAMASE-RELATED DOMAIN-CONTAINING PROTEIN"/>
    <property type="match status" value="1"/>
</dbReference>
<dbReference type="Pfam" id="PF00144">
    <property type="entry name" value="Beta-lactamase"/>
    <property type="match status" value="1"/>
</dbReference>
<dbReference type="SUPFAM" id="SSF56601">
    <property type="entry name" value="beta-lactamase/transpeptidase-like"/>
    <property type="match status" value="1"/>
</dbReference>
<comment type="catalytic activity">
    <reaction evidence="1">
        <text>Preferential cleavage: (Ac)2-L-Lys-D-Ala-|-D-Ala. Also transpeptidation of peptidyl-alanyl moieties that are N-acyl substituents of D-alanine.</text>
        <dbReference type="EC" id="3.4.16.4"/>
    </reaction>
</comment>
<comment type="subcellular location">
    <subcellularLocation>
        <location evidence="1">Cell inner membrane</location>
        <topology evidence="1">Single-pass membrane protein</topology>
    </subcellularLocation>
</comment>
<comment type="similarity">
    <text evidence="1">Belongs to the peptidase S12 family. YfeW subfamily.</text>
</comment>
<protein>
    <recommendedName>
        <fullName evidence="1">Putative D-alanyl-D-alanine carboxypeptidase</fullName>
        <ecNumber evidence="1">3.4.16.4</ecNumber>
    </recommendedName>
    <alternativeName>
        <fullName evidence="1">DD-carboxypeptidase</fullName>
        <shortName evidence="1">DD-CPase</shortName>
    </alternativeName>
</protein>
<keyword id="KW-0121">Carboxypeptidase</keyword>
<keyword id="KW-0997">Cell inner membrane</keyword>
<keyword id="KW-1003">Cell membrane</keyword>
<keyword id="KW-0378">Hydrolase</keyword>
<keyword id="KW-0472">Membrane</keyword>
<keyword id="KW-0645">Protease</keyword>
<keyword id="KW-0812">Transmembrane</keyword>
<keyword id="KW-1133">Transmembrane helix</keyword>
<reference key="1">
    <citation type="journal article" date="2011" name="J. Bacteriol.">
        <title>Comparative genomics of 28 Salmonella enterica isolates: evidence for CRISPR-mediated adaptive sublineage evolution.</title>
        <authorList>
            <person name="Fricke W.F."/>
            <person name="Mammel M.K."/>
            <person name="McDermott P.F."/>
            <person name="Tartera C."/>
            <person name="White D.G."/>
            <person name="Leclerc J.E."/>
            <person name="Ravel J."/>
            <person name="Cebula T.A."/>
        </authorList>
    </citation>
    <scope>NUCLEOTIDE SEQUENCE [LARGE SCALE GENOMIC DNA]</scope>
    <source>
        <strain>SL483</strain>
    </source>
</reference>
<gene>
    <name evidence="1" type="primary">yfeW</name>
    <name type="ordered locus">SeAg_B2622</name>
</gene>
<accession>B5F0K5</accession>
<evidence type="ECO:0000255" key="1">
    <source>
        <dbReference type="HAMAP-Rule" id="MF_01034"/>
    </source>
</evidence>
<feature type="chain" id="PRO_1000149440" description="Putative D-alanyl-D-alanine carboxypeptidase">
    <location>
        <begin position="1"/>
        <end position="432"/>
    </location>
</feature>
<feature type="transmembrane region" description="Helical; Signal-anchor" evidence="1">
    <location>
        <begin position="7"/>
        <end position="25"/>
    </location>
</feature>
<name>YFEW_SALA4</name>
<proteinExistence type="inferred from homology"/>
<sequence>MKFTLVATVLLTFSLSAFAVEYPVLTTASPDQVGFDSQKLHRLDGWIQNQIDAGYPSINLLVIKDNHIVLQKAWGYAKKYDGSTLLAHPILATTNTMYDLASNTKMYATNFALQKLVYEGKIDVNDLVSKYIPDFKDMPGDKIKGKDKLRIIDILHHVAGFPADPQYPNKNVAGKLFSQSKSTTLEMIKKTPLEYQPGSKHIYSDVDYMILGFIIESITAMPLDRYVETTIYKPLGLKHTVFNPLMKGFTPPQIAATELHGNTRDGVIHFPNIRTNTLWGQVHDEKAWYSMGGVSGHAGLFSDTHDIAVLMQVMLNGGGYGNVKLFDDKTVAQFTRRSPEDATFGLGWRVNGNASMTPTFGVLASPQTYGHTGWTGTLTSIDPVNHMAIVILGNRPHSPVANPKVNPNVFVSGLLPAATYGWIVDQIYGSLK</sequence>
<organism>
    <name type="scientific">Salmonella agona (strain SL483)</name>
    <dbReference type="NCBI Taxonomy" id="454166"/>
    <lineage>
        <taxon>Bacteria</taxon>
        <taxon>Pseudomonadati</taxon>
        <taxon>Pseudomonadota</taxon>
        <taxon>Gammaproteobacteria</taxon>
        <taxon>Enterobacterales</taxon>
        <taxon>Enterobacteriaceae</taxon>
        <taxon>Salmonella</taxon>
    </lineage>
</organism>